<dbReference type="EC" id="2.1.3.3" evidence="2"/>
<dbReference type="EMBL" id="AP006878">
    <property type="protein sequence ID" value="BAD85060.1"/>
    <property type="molecule type" value="Genomic_DNA"/>
</dbReference>
<dbReference type="RefSeq" id="WP_011249822.1">
    <property type="nucleotide sequence ID" value="NC_006624.1"/>
</dbReference>
<dbReference type="SMR" id="Q5JI16"/>
<dbReference type="FunCoup" id="Q5JI16">
    <property type="interactions" value="168"/>
</dbReference>
<dbReference type="STRING" id="69014.TK0871"/>
<dbReference type="EnsemblBacteria" id="BAD85060">
    <property type="protein sequence ID" value="BAD85060"/>
    <property type="gene ID" value="TK0871"/>
</dbReference>
<dbReference type="GeneID" id="78447386"/>
<dbReference type="KEGG" id="tko:TK0871"/>
<dbReference type="PATRIC" id="fig|69014.16.peg.850"/>
<dbReference type="eggNOG" id="arCOG00912">
    <property type="taxonomic scope" value="Archaea"/>
</dbReference>
<dbReference type="HOGENOM" id="CLU_043846_3_2_2"/>
<dbReference type="InParanoid" id="Q5JI16"/>
<dbReference type="OrthoDB" id="4696at2157"/>
<dbReference type="PhylomeDB" id="Q5JI16"/>
<dbReference type="UniPathway" id="UPA00068">
    <property type="reaction ID" value="UER00112"/>
</dbReference>
<dbReference type="Proteomes" id="UP000000536">
    <property type="component" value="Chromosome"/>
</dbReference>
<dbReference type="GO" id="GO:0005737">
    <property type="term" value="C:cytoplasm"/>
    <property type="evidence" value="ECO:0007669"/>
    <property type="project" value="UniProtKB-SubCell"/>
</dbReference>
<dbReference type="GO" id="GO:0016597">
    <property type="term" value="F:amino acid binding"/>
    <property type="evidence" value="ECO:0007669"/>
    <property type="project" value="InterPro"/>
</dbReference>
<dbReference type="GO" id="GO:0004585">
    <property type="term" value="F:ornithine carbamoyltransferase activity"/>
    <property type="evidence" value="ECO:0000318"/>
    <property type="project" value="GO_Central"/>
</dbReference>
<dbReference type="GO" id="GO:0042450">
    <property type="term" value="P:arginine biosynthetic process via ornithine"/>
    <property type="evidence" value="ECO:0000318"/>
    <property type="project" value="GO_Central"/>
</dbReference>
<dbReference type="GO" id="GO:0019240">
    <property type="term" value="P:citrulline biosynthetic process"/>
    <property type="evidence" value="ECO:0000318"/>
    <property type="project" value="GO_Central"/>
</dbReference>
<dbReference type="GO" id="GO:0006526">
    <property type="term" value="P:L-arginine biosynthetic process"/>
    <property type="evidence" value="ECO:0007669"/>
    <property type="project" value="UniProtKB-UniRule"/>
</dbReference>
<dbReference type="FunFam" id="3.40.50.1370:FF:000008">
    <property type="entry name" value="Ornithine carbamoyltransferase"/>
    <property type="match status" value="1"/>
</dbReference>
<dbReference type="FunFam" id="3.40.50.1370:FF:000016">
    <property type="entry name" value="Ornithine carbamoyltransferase"/>
    <property type="match status" value="1"/>
</dbReference>
<dbReference type="Gene3D" id="3.40.50.1370">
    <property type="entry name" value="Aspartate/ornithine carbamoyltransferase"/>
    <property type="match status" value="2"/>
</dbReference>
<dbReference type="HAMAP" id="MF_01109">
    <property type="entry name" value="OTCase"/>
    <property type="match status" value="1"/>
</dbReference>
<dbReference type="InterPro" id="IPR006132">
    <property type="entry name" value="Asp/Orn_carbamoyltranf_P-bd"/>
</dbReference>
<dbReference type="InterPro" id="IPR006130">
    <property type="entry name" value="Asp/Orn_carbamoylTrfase"/>
</dbReference>
<dbReference type="InterPro" id="IPR036901">
    <property type="entry name" value="Asp/Orn_carbamoylTrfase_sf"/>
</dbReference>
<dbReference type="InterPro" id="IPR006131">
    <property type="entry name" value="Asp_carbamoyltransf_Asp/Orn-bd"/>
</dbReference>
<dbReference type="InterPro" id="IPR002292">
    <property type="entry name" value="Orn/put_carbamltrans"/>
</dbReference>
<dbReference type="InterPro" id="IPR024904">
    <property type="entry name" value="OTCase_ArgI"/>
</dbReference>
<dbReference type="NCBIfam" id="TIGR00658">
    <property type="entry name" value="orni_carb_tr"/>
    <property type="match status" value="1"/>
</dbReference>
<dbReference type="NCBIfam" id="NF001986">
    <property type="entry name" value="PRK00779.1"/>
    <property type="match status" value="1"/>
</dbReference>
<dbReference type="PANTHER" id="PTHR45753">
    <property type="entry name" value="ORNITHINE CARBAMOYLTRANSFERASE, MITOCHONDRIAL"/>
    <property type="match status" value="1"/>
</dbReference>
<dbReference type="PANTHER" id="PTHR45753:SF3">
    <property type="entry name" value="ORNITHINE TRANSCARBAMYLASE, MITOCHONDRIAL"/>
    <property type="match status" value="1"/>
</dbReference>
<dbReference type="Pfam" id="PF00185">
    <property type="entry name" value="OTCace"/>
    <property type="match status" value="1"/>
</dbReference>
<dbReference type="Pfam" id="PF02729">
    <property type="entry name" value="OTCace_N"/>
    <property type="match status" value="1"/>
</dbReference>
<dbReference type="PRINTS" id="PR00100">
    <property type="entry name" value="AOTCASE"/>
</dbReference>
<dbReference type="PRINTS" id="PR00102">
    <property type="entry name" value="OTCASE"/>
</dbReference>
<dbReference type="SUPFAM" id="SSF53671">
    <property type="entry name" value="Aspartate/ornithine carbamoyltransferase"/>
    <property type="match status" value="1"/>
</dbReference>
<dbReference type="PROSITE" id="PS00097">
    <property type="entry name" value="CARBAMOYLTRANSFERASE"/>
    <property type="match status" value="1"/>
</dbReference>
<organism>
    <name type="scientific">Thermococcus kodakarensis (strain ATCC BAA-918 / JCM 12380 / KOD1)</name>
    <name type="common">Pyrococcus kodakaraensis (strain KOD1)</name>
    <dbReference type="NCBI Taxonomy" id="69014"/>
    <lineage>
        <taxon>Archaea</taxon>
        <taxon>Methanobacteriati</taxon>
        <taxon>Methanobacteriota</taxon>
        <taxon>Thermococci</taxon>
        <taxon>Thermococcales</taxon>
        <taxon>Thermococcaceae</taxon>
        <taxon>Thermococcus</taxon>
    </lineage>
</organism>
<keyword id="KW-0028">Amino-acid biosynthesis</keyword>
<keyword id="KW-0055">Arginine biosynthesis</keyword>
<keyword id="KW-0963">Cytoplasm</keyword>
<keyword id="KW-1185">Reference proteome</keyword>
<keyword id="KW-0808">Transferase</keyword>
<comment type="function">
    <text evidence="1">Reversibly catalyzes the transfer of the carbamoyl group from carbamoyl phosphate (CP) to the N(epsilon) atom of ornithine (ORN) to produce L-citrulline.</text>
</comment>
<comment type="catalytic activity">
    <reaction evidence="2">
        <text>carbamoyl phosphate + L-ornithine = L-citrulline + phosphate + H(+)</text>
        <dbReference type="Rhea" id="RHEA:19513"/>
        <dbReference type="ChEBI" id="CHEBI:15378"/>
        <dbReference type="ChEBI" id="CHEBI:43474"/>
        <dbReference type="ChEBI" id="CHEBI:46911"/>
        <dbReference type="ChEBI" id="CHEBI:57743"/>
        <dbReference type="ChEBI" id="CHEBI:58228"/>
        <dbReference type="EC" id="2.1.3.3"/>
    </reaction>
</comment>
<comment type="pathway">
    <text evidence="2">Amino-acid biosynthesis; L-arginine biosynthesis; L-arginine from L-ornithine and carbamoyl phosphate: step 1/3.</text>
</comment>
<comment type="subcellular location">
    <subcellularLocation>
        <location evidence="2">Cytoplasm</location>
    </subcellularLocation>
</comment>
<comment type="similarity">
    <text evidence="2">Belongs to the aspartate/ornithine carbamoyltransferase superfamily. OTCase family.</text>
</comment>
<reference key="1">
    <citation type="journal article" date="2005" name="Genome Res.">
        <title>Complete genome sequence of the hyperthermophilic archaeon Thermococcus kodakaraensis KOD1 and comparison with Pyrococcus genomes.</title>
        <authorList>
            <person name="Fukui T."/>
            <person name="Atomi H."/>
            <person name="Kanai T."/>
            <person name="Matsumi R."/>
            <person name="Fujiwara S."/>
            <person name="Imanaka T."/>
        </authorList>
    </citation>
    <scope>NUCLEOTIDE SEQUENCE [LARGE SCALE GENOMIC DNA]</scope>
    <source>
        <strain>ATCC BAA-918 / JCM 12380 / KOD1</strain>
    </source>
</reference>
<sequence>MVVSLAGRDVLCLQDFTREELETILKTAEMMKIWNKIGKPHRVLEGKTLAMIFQKPSTRTRISFEVGIYQLGGYGLYLNAQDLQLRRGETIADTARVLSRYVDGIMARVFDHKDVEDLAKYASVPVINGLSDFSHPCQALADYQTILEKKGRIQGLKIVYVGDGNNVAHSLMIAGTKLGANVVVATPEGYEPDPKVIKWAEQNAAESGGSFELLHDPVQAVKDADVIYTDVWASMGQEAEAEERRKIFMPFQVNKELVKHAKPDYIFMHCLPAHRGEEVTDDVIDSPNSVVFDQAENRLHAQKAVMALVMGGIKV</sequence>
<name>OTC_THEKO</name>
<gene>
    <name evidence="2" type="primary">argF</name>
    <name type="ordered locus">TK0871</name>
</gene>
<protein>
    <recommendedName>
        <fullName evidence="2">Ornithine carbamoyltransferase</fullName>
        <shortName evidence="2">OTCase</shortName>
        <ecNumber evidence="2">2.1.3.3</ecNumber>
    </recommendedName>
</protein>
<evidence type="ECO:0000250" key="1"/>
<evidence type="ECO:0000255" key="2">
    <source>
        <dbReference type="HAMAP-Rule" id="MF_01109"/>
    </source>
</evidence>
<proteinExistence type="inferred from homology"/>
<accession>Q5JI16</accession>
<feature type="chain" id="PRO_0000113075" description="Ornithine carbamoyltransferase">
    <location>
        <begin position="1"/>
        <end position="315"/>
    </location>
</feature>
<feature type="binding site" evidence="2">
    <location>
        <begin position="57"/>
        <end position="60"/>
    </location>
    <ligand>
        <name>carbamoyl phosphate</name>
        <dbReference type="ChEBI" id="CHEBI:58228"/>
    </ligand>
</feature>
<feature type="binding site" evidence="2">
    <location>
        <position position="84"/>
    </location>
    <ligand>
        <name>carbamoyl phosphate</name>
        <dbReference type="ChEBI" id="CHEBI:58228"/>
    </ligand>
</feature>
<feature type="binding site" evidence="2">
    <location>
        <position position="108"/>
    </location>
    <ligand>
        <name>carbamoyl phosphate</name>
        <dbReference type="ChEBI" id="CHEBI:58228"/>
    </ligand>
</feature>
<feature type="binding site" evidence="2">
    <location>
        <begin position="135"/>
        <end position="138"/>
    </location>
    <ligand>
        <name>carbamoyl phosphate</name>
        <dbReference type="ChEBI" id="CHEBI:58228"/>
    </ligand>
</feature>
<feature type="binding site" evidence="2">
    <location>
        <position position="166"/>
    </location>
    <ligand>
        <name>L-ornithine</name>
        <dbReference type="ChEBI" id="CHEBI:46911"/>
    </ligand>
</feature>
<feature type="binding site" evidence="2">
    <location>
        <position position="230"/>
    </location>
    <ligand>
        <name>L-ornithine</name>
        <dbReference type="ChEBI" id="CHEBI:46911"/>
    </ligand>
</feature>
<feature type="binding site" evidence="2">
    <location>
        <begin position="234"/>
        <end position="235"/>
    </location>
    <ligand>
        <name>L-ornithine</name>
        <dbReference type="ChEBI" id="CHEBI:46911"/>
    </ligand>
</feature>
<feature type="binding site" evidence="2">
    <location>
        <begin position="270"/>
        <end position="271"/>
    </location>
    <ligand>
        <name>carbamoyl phosphate</name>
        <dbReference type="ChEBI" id="CHEBI:58228"/>
    </ligand>
</feature>
<feature type="binding site" evidence="2">
    <location>
        <position position="298"/>
    </location>
    <ligand>
        <name>carbamoyl phosphate</name>
        <dbReference type="ChEBI" id="CHEBI:58228"/>
    </ligand>
</feature>